<accession>A4VHN8</accession>
<organism>
    <name type="scientific">Stutzerimonas stutzeri (strain A1501)</name>
    <name type="common">Pseudomonas stutzeri</name>
    <dbReference type="NCBI Taxonomy" id="379731"/>
    <lineage>
        <taxon>Bacteria</taxon>
        <taxon>Pseudomonadati</taxon>
        <taxon>Pseudomonadota</taxon>
        <taxon>Gammaproteobacteria</taxon>
        <taxon>Pseudomonadales</taxon>
        <taxon>Pseudomonadaceae</taxon>
        <taxon>Stutzerimonas</taxon>
    </lineage>
</organism>
<evidence type="ECO:0000255" key="1">
    <source>
        <dbReference type="HAMAP-Rule" id="MF_00374"/>
    </source>
</evidence>
<evidence type="ECO:0000305" key="2"/>
<feature type="chain" id="PRO_1000007570" description="Large ribosomal subunit protein uL29">
    <location>
        <begin position="1"/>
        <end position="63"/>
    </location>
</feature>
<protein>
    <recommendedName>
        <fullName evidence="1">Large ribosomal subunit protein uL29</fullName>
    </recommendedName>
    <alternativeName>
        <fullName evidence="2">50S ribosomal protein L29</fullName>
    </alternativeName>
</protein>
<comment type="similarity">
    <text evidence="1">Belongs to the universal ribosomal protein uL29 family.</text>
</comment>
<name>RL29_STUS1</name>
<keyword id="KW-1185">Reference proteome</keyword>
<keyword id="KW-0687">Ribonucleoprotein</keyword>
<keyword id="KW-0689">Ribosomal protein</keyword>
<reference key="1">
    <citation type="journal article" date="2008" name="Proc. Natl. Acad. Sci. U.S.A.">
        <title>Nitrogen fixation island and rhizosphere competence traits in the genome of root-associated Pseudomonas stutzeri A1501.</title>
        <authorList>
            <person name="Yan Y."/>
            <person name="Yang J."/>
            <person name="Dou Y."/>
            <person name="Chen M."/>
            <person name="Ping S."/>
            <person name="Peng J."/>
            <person name="Lu W."/>
            <person name="Zhang W."/>
            <person name="Yao Z."/>
            <person name="Li H."/>
            <person name="Liu W."/>
            <person name="He S."/>
            <person name="Geng L."/>
            <person name="Zhang X."/>
            <person name="Yang F."/>
            <person name="Yu H."/>
            <person name="Zhan Y."/>
            <person name="Li D."/>
            <person name="Lin Z."/>
            <person name="Wang Y."/>
            <person name="Elmerich C."/>
            <person name="Lin M."/>
            <person name="Jin Q."/>
        </authorList>
    </citation>
    <scope>NUCLEOTIDE SEQUENCE [LARGE SCALE GENOMIC DNA]</scope>
    <source>
        <strain>A1501</strain>
    </source>
</reference>
<gene>
    <name evidence="1" type="primary">rpmC</name>
    <name type="ordered locus">PST_0792</name>
</gene>
<dbReference type="EMBL" id="CP000304">
    <property type="protein sequence ID" value="ABP78489.1"/>
    <property type="molecule type" value="Genomic_DNA"/>
</dbReference>
<dbReference type="RefSeq" id="WP_003281834.1">
    <property type="nucleotide sequence ID" value="NC_009434.1"/>
</dbReference>
<dbReference type="SMR" id="A4VHN8"/>
<dbReference type="GeneID" id="75213393"/>
<dbReference type="KEGG" id="psa:PST_0792"/>
<dbReference type="eggNOG" id="COG0255">
    <property type="taxonomic scope" value="Bacteria"/>
</dbReference>
<dbReference type="HOGENOM" id="CLU_158491_1_2_6"/>
<dbReference type="Proteomes" id="UP000000233">
    <property type="component" value="Chromosome"/>
</dbReference>
<dbReference type="GO" id="GO:0022625">
    <property type="term" value="C:cytosolic large ribosomal subunit"/>
    <property type="evidence" value="ECO:0007669"/>
    <property type="project" value="TreeGrafter"/>
</dbReference>
<dbReference type="GO" id="GO:0003735">
    <property type="term" value="F:structural constituent of ribosome"/>
    <property type="evidence" value="ECO:0007669"/>
    <property type="project" value="InterPro"/>
</dbReference>
<dbReference type="GO" id="GO:0006412">
    <property type="term" value="P:translation"/>
    <property type="evidence" value="ECO:0007669"/>
    <property type="project" value="UniProtKB-UniRule"/>
</dbReference>
<dbReference type="CDD" id="cd00427">
    <property type="entry name" value="Ribosomal_L29_HIP"/>
    <property type="match status" value="1"/>
</dbReference>
<dbReference type="FunFam" id="1.10.287.310:FF:000001">
    <property type="entry name" value="50S ribosomal protein L29"/>
    <property type="match status" value="1"/>
</dbReference>
<dbReference type="Gene3D" id="1.10.287.310">
    <property type="match status" value="1"/>
</dbReference>
<dbReference type="HAMAP" id="MF_00374">
    <property type="entry name" value="Ribosomal_uL29"/>
    <property type="match status" value="1"/>
</dbReference>
<dbReference type="InterPro" id="IPR050063">
    <property type="entry name" value="Ribosomal_protein_uL29"/>
</dbReference>
<dbReference type="InterPro" id="IPR001854">
    <property type="entry name" value="Ribosomal_uL29"/>
</dbReference>
<dbReference type="InterPro" id="IPR018254">
    <property type="entry name" value="Ribosomal_uL29_CS"/>
</dbReference>
<dbReference type="InterPro" id="IPR036049">
    <property type="entry name" value="Ribosomal_uL29_sf"/>
</dbReference>
<dbReference type="NCBIfam" id="TIGR00012">
    <property type="entry name" value="L29"/>
    <property type="match status" value="1"/>
</dbReference>
<dbReference type="PANTHER" id="PTHR10916">
    <property type="entry name" value="60S RIBOSOMAL PROTEIN L35/50S RIBOSOMAL PROTEIN L29"/>
    <property type="match status" value="1"/>
</dbReference>
<dbReference type="PANTHER" id="PTHR10916:SF0">
    <property type="entry name" value="LARGE RIBOSOMAL SUBUNIT PROTEIN UL29C"/>
    <property type="match status" value="1"/>
</dbReference>
<dbReference type="Pfam" id="PF00831">
    <property type="entry name" value="Ribosomal_L29"/>
    <property type="match status" value="1"/>
</dbReference>
<dbReference type="SUPFAM" id="SSF46561">
    <property type="entry name" value="Ribosomal protein L29 (L29p)"/>
    <property type="match status" value="1"/>
</dbReference>
<dbReference type="PROSITE" id="PS00579">
    <property type="entry name" value="RIBOSOMAL_L29"/>
    <property type="match status" value="1"/>
</dbReference>
<proteinExistence type="inferred from homology"/>
<sequence length="63" mass="7273">MKANELREKSVEQLNEQLLELLRDQFNLRMQKATGQLGQSHLLSQVKRDIARVKTVLNQQAGK</sequence>